<gene>
    <name evidence="1" type="primary">pnp</name>
    <name type="ordered locus">Patl_1632</name>
</gene>
<keyword id="KW-0963">Cytoplasm</keyword>
<keyword id="KW-0460">Magnesium</keyword>
<keyword id="KW-0479">Metal-binding</keyword>
<keyword id="KW-0548">Nucleotidyltransferase</keyword>
<keyword id="KW-0694">RNA-binding</keyword>
<keyword id="KW-0808">Transferase</keyword>
<reference key="1">
    <citation type="submission" date="2006-06" db="EMBL/GenBank/DDBJ databases">
        <title>Complete sequence of Pseudoalteromonas atlantica T6c.</title>
        <authorList>
            <consortium name="US DOE Joint Genome Institute"/>
            <person name="Copeland A."/>
            <person name="Lucas S."/>
            <person name="Lapidus A."/>
            <person name="Barry K."/>
            <person name="Detter J.C."/>
            <person name="Glavina del Rio T."/>
            <person name="Hammon N."/>
            <person name="Israni S."/>
            <person name="Dalin E."/>
            <person name="Tice H."/>
            <person name="Pitluck S."/>
            <person name="Saunders E."/>
            <person name="Brettin T."/>
            <person name="Bruce D."/>
            <person name="Han C."/>
            <person name="Tapia R."/>
            <person name="Gilna P."/>
            <person name="Schmutz J."/>
            <person name="Larimer F."/>
            <person name="Land M."/>
            <person name="Hauser L."/>
            <person name="Kyrpides N."/>
            <person name="Kim E."/>
            <person name="Karls A.C."/>
            <person name="Bartlett D."/>
            <person name="Higgins B.P."/>
            <person name="Richardson P."/>
        </authorList>
    </citation>
    <scope>NUCLEOTIDE SEQUENCE [LARGE SCALE GENOMIC DNA]</scope>
    <source>
        <strain>T6c / ATCC BAA-1087</strain>
    </source>
</reference>
<sequence length="703" mass="76143">MTPITKSFQYGQHTVTLETGVIARQATAAVMASMDDTSVLVSVVGKKDTKPGQDFFPLTVNYQERTYAAGKIPGGFFKREGRPSEYETLTSRLIDRPIRPLFPDGFMNEVQIIVTVVSANPEIPTDIISLIGTSAALAISGMPFNGPVGAARVGYTDGQYVLNTRTSELEISQLDLVVAGTKGAVLMVESEAEVLSEDVMLGAVMFGHEQMQTVVNAVTEFAAEVNTPKWDWVAEPANVTLKDKIKALAEAEMTEAYQISDKMARKDAIVALTDKTVAAIVEADAEQDAKEVSELLHELESDVVRSRILAGQPRIDGRDPAMIRALDVATGILPRTHGSALFTRGETQAIVAATLGTERDAQMIDGLNGKVDSRFMLHYNFPPYCVGETGFVGSPKRREIGHGRLAKRGIQAVMPSEKEFPYVVRVVSEITESNGSSSMASVCGTSLALMDAGVPIKASVAGIAMGLVKNDENFVVLSDILGDEDHLGDMDFKVAGTTEGITALQMDIKIEGITQEIMQVALKQAKEARLHILGVMDQAISGHRDEMSEFAPRIYTLKIDQDKIRDVIGKGGAMIRSITEASDTNIEIEDDGTIKIFATERAKADIAISKIEQVTADVEAGKTYEGKVTRIVDFGAFVEILPGKEGLVHISQIAHERVNKVADHLSEGQIINVKVMEIDRQNRVRLSIKELLEKPAAPAEGNE</sequence>
<dbReference type="EC" id="2.7.7.8" evidence="1"/>
<dbReference type="EMBL" id="CP000388">
    <property type="protein sequence ID" value="ABG40154.1"/>
    <property type="molecule type" value="Genomic_DNA"/>
</dbReference>
<dbReference type="RefSeq" id="WP_011574461.1">
    <property type="nucleotide sequence ID" value="NC_008228.1"/>
</dbReference>
<dbReference type="SMR" id="Q15VD4"/>
<dbReference type="STRING" id="342610.Patl_1632"/>
<dbReference type="KEGG" id="pat:Patl_1632"/>
<dbReference type="eggNOG" id="COG1185">
    <property type="taxonomic scope" value="Bacteria"/>
</dbReference>
<dbReference type="HOGENOM" id="CLU_004217_2_2_6"/>
<dbReference type="OrthoDB" id="9804305at2"/>
<dbReference type="Proteomes" id="UP000001981">
    <property type="component" value="Chromosome"/>
</dbReference>
<dbReference type="GO" id="GO:0005829">
    <property type="term" value="C:cytosol"/>
    <property type="evidence" value="ECO:0007669"/>
    <property type="project" value="TreeGrafter"/>
</dbReference>
<dbReference type="GO" id="GO:0000175">
    <property type="term" value="F:3'-5'-RNA exonuclease activity"/>
    <property type="evidence" value="ECO:0007669"/>
    <property type="project" value="TreeGrafter"/>
</dbReference>
<dbReference type="GO" id="GO:0000287">
    <property type="term" value="F:magnesium ion binding"/>
    <property type="evidence" value="ECO:0007669"/>
    <property type="project" value="UniProtKB-UniRule"/>
</dbReference>
<dbReference type="GO" id="GO:0004654">
    <property type="term" value="F:polyribonucleotide nucleotidyltransferase activity"/>
    <property type="evidence" value="ECO:0007669"/>
    <property type="project" value="UniProtKB-UniRule"/>
</dbReference>
<dbReference type="GO" id="GO:0003723">
    <property type="term" value="F:RNA binding"/>
    <property type="evidence" value="ECO:0007669"/>
    <property type="project" value="UniProtKB-UniRule"/>
</dbReference>
<dbReference type="GO" id="GO:0006402">
    <property type="term" value="P:mRNA catabolic process"/>
    <property type="evidence" value="ECO:0007669"/>
    <property type="project" value="UniProtKB-UniRule"/>
</dbReference>
<dbReference type="GO" id="GO:0006396">
    <property type="term" value="P:RNA processing"/>
    <property type="evidence" value="ECO:0007669"/>
    <property type="project" value="InterPro"/>
</dbReference>
<dbReference type="CDD" id="cd02393">
    <property type="entry name" value="KH-I_PNPase"/>
    <property type="match status" value="1"/>
</dbReference>
<dbReference type="CDD" id="cd11363">
    <property type="entry name" value="RNase_PH_PNPase_1"/>
    <property type="match status" value="1"/>
</dbReference>
<dbReference type="CDD" id="cd11364">
    <property type="entry name" value="RNase_PH_PNPase_2"/>
    <property type="match status" value="1"/>
</dbReference>
<dbReference type="CDD" id="cd04472">
    <property type="entry name" value="S1_PNPase"/>
    <property type="match status" value="1"/>
</dbReference>
<dbReference type="FunFam" id="2.40.50.140:FF:000023">
    <property type="entry name" value="Polyribonucleotide nucleotidyltransferase"/>
    <property type="match status" value="1"/>
</dbReference>
<dbReference type="FunFam" id="3.30.1370.10:FF:000001">
    <property type="entry name" value="Polyribonucleotide nucleotidyltransferase"/>
    <property type="match status" value="1"/>
</dbReference>
<dbReference type="FunFam" id="3.30.230.70:FF:000001">
    <property type="entry name" value="Polyribonucleotide nucleotidyltransferase"/>
    <property type="match status" value="1"/>
</dbReference>
<dbReference type="FunFam" id="3.30.230.70:FF:000002">
    <property type="entry name" value="Polyribonucleotide nucleotidyltransferase"/>
    <property type="match status" value="1"/>
</dbReference>
<dbReference type="Gene3D" id="3.30.230.70">
    <property type="entry name" value="GHMP Kinase, N-terminal domain"/>
    <property type="match status" value="2"/>
</dbReference>
<dbReference type="Gene3D" id="3.30.1370.10">
    <property type="entry name" value="K Homology domain, type 1"/>
    <property type="match status" value="1"/>
</dbReference>
<dbReference type="Gene3D" id="2.40.50.140">
    <property type="entry name" value="Nucleic acid-binding proteins"/>
    <property type="match status" value="1"/>
</dbReference>
<dbReference type="HAMAP" id="MF_01595">
    <property type="entry name" value="PNPase"/>
    <property type="match status" value="1"/>
</dbReference>
<dbReference type="InterPro" id="IPR001247">
    <property type="entry name" value="ExoRNase_PH_dom1"/>
</dbReference>
<dbReference type="InterPro" id="IPR015847">
    <property type="entry name" value="ExoRNase_PH_dom2"/>
</dbReference>
<dbReference type="InterPro" id="IPR036345">
    <property type="entry name" value="ExoRNase_PH_dom2_sf"/>
</dbReference>
<dbReference type="InterPro" id="IPR004087">
    <property type="entry name" value="KH_dom"/>
</dbReference>
<dbReference type="InterPro" id="IPR004088">
    <property type="entry name" value="KH_dom_type_1"/>
</dbReference>
<dbReference type="InterPro" id="IPR036612">
    <property type="entry name" value="KH_dom_type_1_sf"/>
</dbReference>
<dbReference type="InterPro" id="IPR012340">
    <property type="entry name" value="NA-bd_OB-fold"/>
</dbReference>
<dbReference type="InterPro" id="IPR012162">
    <property type="entry name" value="PNPase"/>
</dbReference>
<dbReference type="InterPro" id="IPR027408">
    <property type="entry name" value="PNPase/RNase_PH_dom_sf"/>
</dbReference>
<dbReference type="InterPro" id="IPR015848">
    <property type="entry name" value="PNPase_PH_RNA-bd_bac/org-type"/>
</dbReference>
<dbReference type="InterPro" id="IPR020568">
    <property type="entry name" value="Ribosomal_Su5_D2-typ_SF"/>
</dbReference>
<dbReference type="InterPro" id="IPR003029">
    <property type="entry name" value="S1_domain"/>
</dbReference>
<dbReference type="NCBIfam" id="TIGR03591">
    <property type="entry name" value="polynuc_phos"/>
    <property type="match status" value="1"/>
</dbReference>
<dbReference type="NCBIfam" id="NF008805">
    <property type="entry name" value="PRK11824.1"/>
    <property type="match status" value="1"/>
</dbReference>
<dbReference type="PANTHER" id="PTHR11252">
    <property type="entry name" value="POLYRIBONUCLEOTIDE NUCLEOTIDYLTRANSFERASE"/>
    <property type="match status" value="1"/>
</dbReference>
<dbReference type="PANTHER" id="PTHR11252:SF0">
    <property type="entry name" value="POLYRIBONUCLEOTIDE NUCLEOTIDYLTRANSFERASE 1, MITOCHONDRIAL"/>
    <property type="match status" value="1"/>
</dbReference>
<dbReference type="Pfam" id="PF00013">
    <property type="entry name" value="KH_1"/>
    <property type="match status" value="1"/>
</dbReference>
<dbReference type="Pfam" id="PF03726">
    <property type="entry name" value="PNPase"/>
    <property type="match status" value="1"/>
</dbReference>
<dbReference type="Pfam" id="PF01138">
    <property type="entry name" value="RNase_PH"/>
    <property type="match status" value="2"/>
</dbReference>
<dbReference type="Pfam" id="PF03725">
    <property type="entry name" value="RNase_PH_C"/>
    <property type="match status" value="2"/>
</dbReference>
<dbReference type="Pfam" id="PF00575">
    <property type="entry name" value="S1"/>
    <property type="match status" value="1"/>
</dbReference>
<dbReference type="PIRSF" id="PIRSF005499">
    <property type="entry name" value="PNPase"/>
    <property type="match status" value="1"/>
</dbReference>
<dbReference type="SMART" id="SM00322">
    <property type="entry name" value="KH"/>
    <property type="match status" value="1"/>
</dbReference>
<dbReference type="SMART" id="SM00316">
    <property type="entry name" value="S1"/>
    <property type="match status" value="1"/>
</dbReference>
<dbReference type="SUPFAM" id="SSF54791">
    <property type="entry name" value="Eukaryotic type KH-domain (KH-domain type I)"/>
    <property type="match status" value="1"/>
</dbReference>
<dbReference type="SUPFAM" id="SSF50249">
    <property type="entry name" value="Nucleic acid-binding proteins"/>
    <property type="match status" value="1"/>
</dbReference>
<dbReference type="SUPFAM" id="SSF55666">
    <property type="entry name" value="Ribonuclease PH domain 2-like"/>
    <property type="match status" value="2"/>
</dbReference>
<dbReference type="SUPFAM" id="SSF54211">
    <property type="entry name" value="Ribosomal protein S5 domain 2-like"/>
    <property type="match status" value="2"/>
</dbReference>
<dbReference type="PROSITE" id="PS50084">
    <property type="entry name" value="KH_TYPE_1"/>
    <property type="match status" value="1"/>
</dbReference>
<dbReference type="PROSITE" id="PS50126">
    <property type="entry name" value="S1"/>
    <property type="match status" value="1"/>
</dbReference>
<proteinExistence type="inferred from homology"/>
<evidence type="ECO:0000255" key="1">
    <source>
        <dbReference type="HAMAP-Rule" id="MF_01595"/>
    </source>
</evidence>
<feature type="chain" id="PRO_0000329776" description="Polyribonucleotide nucleotidyltransferase">
    <location>
        <begin position="1"/>
        <end position="703"/>
    </location>
</feature>
<feature type="domain" description="KH" evidence="1">
    <location>
        <begin position="552"/>
        <end position="611"/>
    </location>
</feature>
<feature type="domain" description="S1 motif" evidence="1">
    <location>
        <begin position="621"/>
        <end position="689"/>
    </location>
</feature>
<feature type="binding site" evidence="1">
    <location>
        <position position="485"/>
    </location>
    <ligand>
        <name>Mg(2+)</name>
        <dbReference type="ChEBI" id="CHEBI:18420"/>
    </ligand>
</feature>
<feature type="binding site" evidence="1">
    <location>
        <position position="491"/>
    </location>
    <ligand>
        <name>Mg(2+)</name>
        <dbReference type="ChEBI" id="CHEBI:18420"/>
    </ligand>
</feature>
<name>PNP_PSEA6</name>
<accession>Q15VD4</accession>
<comment type="function">
    <text evidence="1">Involved in mRNA degradation. Catalyzes the phosphorolysis of single-stranded polyribonucleotides processively in the 3'- to 5'-direction.</text>
</comment>
<comment type="catalytic activity">
    <reaction evidence="1">
        <text>RNA(n+1) + phosphate = RNA(n) + a ribonucleoside 5'-diphosphate</text>
        <dbReference type="Rhea" id="RHEA:22096"/>
        <dbReference type="Rhea" id="RHEA-COMP:14527"/>
        <dbReference type="Rhea" id="RHEA-COMP:17342"/>
        <dbReference type="ChEBI" id="CHEBI:43474"/>
        <dbReference type="ChEBI" id="CHEBI:57930"/>
        <dbReference type="ChEBI" id="CHEBI:140395"/>
        <dbReference type="EC" id="2.7.7.8"/>
    </reaction>
</comment>
<comment type="cofactor">
    <cofactor evidence="1">
        <name>Mg(2+)</name>
        <dbReference type="ChEBI" id="CHEBI:18420"/>
    </cofactor>
</comment>
<comment type="subunit">
    <text evidence="1">Component of the RNA degradosome, which is a multiprotein complex involved in RNA processing and mRNA degradation.</text>
</comment>
<comment type="subcellular location">
    <subcellularLocation>
        <location evidence="1">Cytoplasm</location>
    </subcellularLocation>
</comment>
<comment type="similarity">
    <text evidence="1">Belongs to the polyribonucleotide nucleotidyltransferase family.</text>
</comment>
<protein>
    <recommendedName>
        <fullName evidence="1">Polyribonucleotide nucleotidyltransferase</fullName>
        <ecNumber evidence="1">2.7.7.8</ecNumber>
    </recommendedName>
    <alternativeName>
        <fullName evidence="1">Polynucleotide phosphorylase</fullName>
        <shortName evidence="1">PNPase</shortName>
    </alternativeName>
</protein>
<organism>
    <name type="scientific">Pseudoalteromonas atlantica (strain T6c / ATCC BAA-1087)</name>
    <dbReference type="NCBI Taxonomy" id="3042615"/>
    <lineage>
        <taxon>Bacteria</taxon>
        <taxon>Pseudomonadati</taxon>
        <taxon>Pseudomonadota</taxon>
        <taxon>Gammaproteobacteria</taxon>
        <taxon>Alteromonadales</taxon>
        <taxon>Alteromonadaceae</taxon>
        <taxon>Paraglaciecola</taxon>
    </lineage>
</organism>